<proteinExistence type="inferred from homology"/>
<accession>C1EVJ3</accession>
<sequence>MQTVRMTTAQALVKFLNQQYVEFDGKQQKFIKGIFTIFGHGNVVGLGQALEEDAGELEVYQGRNEQGMANAAMAFAKQKHRKQIMACTSSVGPGSANMITSAATASANNIPVLLLPGDVFATRQSDPVLQQIEQTHDLSISTNDAFRAVSKYWDRINRPEQLMTAMIQAMRVLTNPADTGAVTICLPQDVQGEAWDFPDYFFQKRVHRIERRLPTKASLADAVEMIKRKKKPVMICGGGVRYAEAAEELKQFAETFHIPFGETQAGKSAIESSHPYNLGGIGVTGNIAANTIAKEADLVIGIGTRFTDFTTASKQLFQNEEVEFLNINISEFHANKLDALKVIADAKEALLVLIDELQVMDYRSSYTVEIADAKEAWETELSRLHNIRFTGQDFTPEVEGHFDGNLNEYVDALGSQLTQTAVIGQINTLLDEDAIIVGAAGSLPGDLQRMWASRKPNTYHMEYGYSCMGYEVAGALGAKLAEPSKEVYAMVGDGSYQMLHSELVTSLQENKKINVLLFDNSGFGCINNLQMGNGMGSFGTEFRYRNQETRKLDGTIMKIDFAASAAGYGVKTYHVTSLEQLQEALIDAKKQTVSTLIDIKVLPKTMTNGYESWWHVGIAEVSKSQRVQAAYESKVSNLQQARSY</sequence>
<comment type="function">
    <text evidence="1">Involved in the cleavage of the C1-C2 bond of 3D-(3,5/4)-trihydroxycyclohexane-1,2-dione (THcHDO) to yield 5-deoxy-glucuronate (5DG).</text>
</comment>
<comment type="catalytic activity">
    <reaction evidence="1">
        <text>3D-3,5/4-trihydroxycyclohexane-1,2-dione + H2O = 5-deoxy-D-glucuronate + H(+)</text>
        <dbReference type="Rhea" id="RHEA:25836"/>
        <dbReference type="ChEBI" id="CHEBI:15377"/>
        <dbReference type="ChEBI" id="CHEBI:15378"/>
        <dbReference type="ChEBI" id="CHEBI:28446"/>
        <dbReference type="ChEBI" id="CHEBI:58852"/>
        <dbReference type="EC" id="3.7.1.22"/>
    </reaction>
</comment>
<comment type="cofactor">
    <cofactor evidence="1">
        <name>Mg(2+)</name>
        <dbReference type="ChEBI" id="CHEBI:18420"/>
    </cofactor>
    <text evidence="1">Binds 1 Mg(2+) ion per subunit.</text>
</comment>
<comment type="cofactor">
    <cofactor evidence="1">
        <name>thiamine diphosphate</name>
        <dbReference type="ChEBI" id="CHEBI:58937"/>
    </cofactor>
    <text evidence="1">Binds 1 thiamine pyrophosphate per subunit.</text>
</comment>
<comment type="pathway">
    <text evidence="1">Polyol metabolism; myo-inositol degradation into acetyl-CoA; acetyl-CoA from myo-inositol: step 3/7.</text>
</comment>
<comment type="similarity">
    <text evidence="1">Belongs to the TPP enzyme family.</text>
</comment>
<keyword id="KW-0378">Hydrolase</keyword>
<keyword id="KW-0460">Magnesium</keyword>
<keyword id="KW-0479">Metal-binding</keyword>
<keyword id="KW-0520">NAD</keyword>
<keyword id="KW-0786">Thiamine pyrophosphate</keyword>
<reference key="1">
    <citation type="submission" date="2009-02" db="EMBL/GenBank/DDBJ databases">
        <title>Genome sequence of Bacillus cereus 03BB102.</title>
        <authorList>
            <person name="Dodson R.J."/>
            <person name="Jackson P."/>
            <person name="Munk A.C."/>
            <person name="Brettin T."/>
            <person name="Bruce D."/>
            <person name="Detter C."/>
            <person name="Tapia R."/>
            <person name="Han C."/>
            <person name="Sutton G."/>
            <person name="Sims D."/>
        </authorList>
    </citation>
    <scope>NUCLEOTIDE SEQUENCE [LARGE SCALE GENOMIC DNA]</scope>
    <source>
        <strain>03BB102</strain>
    </source>
</reference>
<evidence type="ECO:0000255" key="1">
    <source>
        <dbReference type="HAMAP-Rule" id="MF_01669"/>
    </source>
</evidence>
<protein>
    <recommendedName>
        <fullName evidence="1">3D-(3,5/4)-trihydroxycyclohexane-1,2-dione hydrolase</fullName>
        <shortName evidence="1">THcHDO hydrolase</shortName>
        <ecNumber evidence="1">3.7.1.22</ecNumber>
    </recommendedName>
</protein>
<gene>
    <name evidence="1" type="primary">iolD</name>
    <name type="ordered locus">BCA_2599</name>
</gene>
<organism>
    <name type="scientific">Bacillus cereus (strain 03BB102)</name>
    <dbReference type="NCBI Taxonomy" id="572264"/>
    <lineage>
        <taxon>Bacteria</taxon>
        <taxon>Bacillati</taxon>
        <taxon>Bacillota</taxon>
        <taxon>Bacilli</taxon>
        <taxon>Bacillales</taxon>
        <taxon>Bacillaceae</taxon>
        <taxon>Bacillus</taxon>
        <taxon>Bacillus cereus group</taxon>
    </lineage>
</organism>
<feature type="chain" id="PRO_1000187310" description="3D-(3,5/4)-trihydroxycyclohexane-1,2-dione hydrolase">
    <location>
        <begin position="1"/>
        <end position="644"/>
    </location>
</feature>
<feature type="region of interest" description="Thiamine pyrophosphate binding" evidence="1">
    <location>
        <begin position="442"/>
        <end position="522"/>
    </location>
</feature>
<feature type="binding site" evidence="1">
    <location>
        <position position="65"/>
    </location>
    <ligand>
        <name>thiamine diphosphate</name>
        <dbReference type="ChEBI" id="CHEBI:58937"/>
    </ligand>
</feature>
<feature type="binding site" evidence="1">
    <location>
        <position position="493"/>
    </location>
    <ligand>
        <name>Mg(2+)</name>
        <dbReference type="ChEBI" id="CHEBI:18420"/>
    </ligand>
</feature>
<feature type="binding site" evidence="1">
    <location>
        <position position="520"/>
    </location>
    <ligand>
        <name>Mg(2+)</name>
        <dbReference type="ChEBI" id="CHEBI:18420"/>
    </ligand>
</feature>
<dbReference type="EC" id="3.7.1.22" evidence="1"/>
<dbReference type="EMBL" id="CP001407">
    <property type="protein sequence ID" value="ACO25945.1"/>
    <property type="molecule type" value="Genomic_DNA"/>
</dbReference>
<dbReference type="RefSeq" id="WP_001195348.1">
    <property type="nucleotide sequence ID" value="NZ_CP009318.1"/>
</dbReference>
<dbReference type="SMR" id="C1EVJ3"/>
<dbReference type="KEGG" id="bcx:BCA_2599"/>
<dbReference type="PATRIC" id="fig|572264.18.peg.2548"/>
<dbReference type="UniPathway" id="UPA00076">
    <property type="reaction ID" value="UER00145"/>
</dbReference>
<dbReference type="Proteomes" id="UP000002210">
    <property type="component" value="Chromosome"/>
</dbReference>
<dbReference type="GO" id="GO:0005948">
    <property type="term" value="C:acetolactate synthase complex"/>
    <property type="evidence" value="ECO:0007669"/>
    <property type="project" value="TreeGrafter"/>
</dbReference>
<dbReference type="GO" id="GO:0102481">
    <property type="term" value="F:3D-(3,5/4)-trihydroxycyclohexane-1,2-dione hydrolase activity"/>
    <property type="evidence" value="ECO:0007669"/>
    <property type="project" value="UniProtKB-EC"/>
</dbReference>
<dbReference type="GO" id="GO:0003984">
    <property type="term" value="F:acetolactate synthase activity"/>
    <property type="evidence" value="ECO:0007669"/>
    <property type="project" value="TreeGrafter"/>
</dbReference>
<dbReference type="GO" id="GO:0050660">
    <property type="term" value="F:flavin adenine dinucleotide binding"/>
    <property type="evidence" value="ECO:0007669"/>
    <property type="project" value="TreeGrafter"/>
</dbReference>
<dbReference type="GO" id="GO:0000287">
    <property type="term" value="F:magnesium ion binding"/>
    <property type="evidence" value="ECO:0007669"/>
    <property type="project" value="UniProtKB-UniRule"/>
</dbReference>
<dbReference type="GO" id="GO:0030976">
    <property type="term" value="F:thiamine pyrophosphate binding"/>
    <property type="evidence" value="ECO:0007669"/>
    <property type="project" value="UniProtKB-UniRule"/>
</dbReference>
<dbReference type="GO" id="GO:0019310">
    <property type="term" value="P:inositol catabolic process"/>
    <property type="evidence" value="ECO:0007669"/>
    <property type="project" value="UniProtKB-UniRule"/>
</dbReference>
<dbReference type="GO" id="GO:0009097">
    <property type="term" value="P:isoleucine biosynthetic process"/>
    <property type="evidence" value="ECO:0007669"/>
    <property type="project" value="TreeGrafter"/>
</dbReference>
<dbReference type="GO" id="GO:0009099">
    <property type="term" value="P:L-valine biosynthetic process"/>
    <property type="evidence" value="ECO:0007669"/>
    <property type="project" value="TreeGrafter"/>
</dbReference>
<dbReference type="CDD" id="cd02003">
    <property type="entry name" value="TPP_IolD"/>
    <property type="match status" value="1"/>
</dbReference>
<dbReference type="CDD" id="cd07035">
    <property type="entry name" value="TPP_PYR_POX_like"/>
    <property type="match status" value="1"/>
</dbReference>
<dbReference type="FunFam" id="3.40.50.1220:FF:000040">
    <property type="entry name" value="3D-(3,5/4)-trihydroxycyclohexane-1,2-dione hydrolase"/>
    <property type="match status" value="1"/>
</dbReference>
<dbReference type="FunFam" id="3.40.50.970:FF:000056">
    <property type="entry name" value="3D-(3,5/4)-trihydroxycyclohexane-1,2-dione hydrolase"/>
    <property type="match status" value="1"/>
</dbReference>
<dbReference type="FunFam" id="3.40.50.970:FF:000072">
    <property type="entry name" value="3D-(3,5/4)-trihydroxycyclohexane-1,2-dione hydrolase"/>
    <property type="match status" value="1"/>
</dbReference>
<dbReference type="Gene3D" id="3.40.50.970">
    <property type="match status" value="2"/>
</dbReference>
<dbReference type="Gene3D" id="3.40.50.1220">
    <property type="entry name" value="TPP-binding domain"/>
    <property type="match status" value="1"/>
</dbReference>
<dbReference type="HAMAP" id="MF_01669">
    <property type="entry name" value="IolD"/>
    <property type="match status" value="1"/>
</dbReference>
<dbReference type="InterPro" id="IPR029035">
    <property type="entry name" value="DHS-like_NAD/FAD-binding_dom"/>
</dbReference>
<dbReference type="InterPro" id="IPR030817">
    <property type="entry name" value="Myo_inos_IolD"/>
</dbReference>
<dbReference type="InterPro" id="IPR023757">
    <property type="entry name" value="THcHDO_hydrolase_firmi"/>
</dbReference>
<dbReference type="InterPro" id="IPR029061">
    <property type="entry name" value="THDP-binding"/>
</dbReference>
<dbReference type="InterPro" id="IPR012000">
    <property type="entry name" value="Thiamin_PyroP_enz_cen_dom"/>
</dbReference>
<dbReference type="InterPro" id="IPR012001">
    <property type="entry name" value="Thiamin_PyroP_enz_TPP-bd_dom"/>
</dbReference>
<dbReference type="InterPro" id="IPR000399">
    <property type="entry name" value="TPP-bd_CS"/>
</dbReference>
<dbReference type="InterPro" id="IPR045229">
    <property type="entry name" value="TPP_enz"/>
</dbReference>
<dbReference type="InterPro" id="IPR011766">
    <property type="entry name" value="TPP_enzyme_TPP-bd"/>
</dbReference>
<dbReference type="NCBIfam" id="TIGR04377">
    <property type="entry name" value="myo_inos_iolD"/>
    <property type="match status" value="1"/>
</dbReference>
<dbReference type="PANTHER" id="PTHR18968:SF9">
    <property type="entry name" value="3D-(3,5_4)-TRIHYDROXYCYCLOHEXANE-1,2-DIONE HYDROLASE"/>
    <property type="match status" value="1"/>
</dbReference>
<dbReference type="PANTHER" id="PTHR18968">
    <property type="entry name" value="THIAMINE PYROPHOSPHATE ENZYMES"/>
    <property type="match status" value="1"/>
</dbReference>
<dbReference type="Pfam" id="PF02775">
    <property type="entry name" value="TPP_enzyme_C"/>
    <property type="match status" value="1"/>
</dbReference>
<dbReference type="Pfam" id="PF00205">
    <property type="entry name" value="TPP_enzyme_M"/>
    <property type="match status" value="1"/>
</dbReference>
<dbReference type="Pfam" id="PF02776">
    <property type="entry name" value="TPP_enzyme_N"/>
    <property type="match status" value="1"/>
</dbReference>
<dbReference type="SUPFAM" id="SSF52467">
    <property type="entry name" value="DHS-like NAD/FAD-binding domain"/>
    <property type="match status" value="1"/>
</dbReference>
<dbReference type="SUPFAM" id="SSF52518">
    <property type="entry name" value="Thiamin diphosphate-binding fold (THDP-binding)"/>
    <property type="match status" value="2"/>
</dbReference>
<dbReference type="PROSITE" id="PS00187">
    <property type="entry name" value="TPP_ENZYMES"/>
    <property type="match status" value="1"/>
</dbReference>
<name>IOLD_BACC3</name>